<protein>
    <recommendedName>
        <fullName>Serine/threonine-protein kinase pim-1</fullName>
        <ecNumber>2.7.11.1</ecNumber>
    </recommendedName>
</protein>
<comment type="function">
    <text evidence="1 5 6 7 8 9 10 11">Proto-oncogene with serine/threonine kinase activity involved in cell survival and cell proliferation and thus providing a selective advantage in tumorigenesis (PubMed:15199164, PubMed:1825810). Exerts its oncogenic activity through: the regulation of MYC transcriptional activity, the regulation of cell cycle progression and by phosphorylation and inhibition of proapoptotic proteins (BAD, MAP3K5, FOXO3) (By similarity). Phosphorylation of MYC leads to an increase of MYC protein stability and thereby an increase of transcriptional activity (PubMed:18438430). The stabilization of MYC exerted by PIM1 might explain partly the strong synergism between these two oncogenes in tumorigenesis (PubMed:18438430). Mediates survival signaling through phosphorylation of BAD, which induces release of the anti-apoptotic protein Bcl-X(L)/BCL2L1 (PubMed:15280015). Phosphorylation of MAP3K5, another proapoptotic protein, by PIM1, significantly decreases MAP3K5 kinase activity and inhibits MAP3K5-mediated phosphorylation of JNK and JNK/p38MAPK subsequently reducing caspase-3 activation and cell apoptosis (By similarity). Stimulates cell cycle progression at the G1-S and G2-M transitions by phosphorylation of CDC25A and CDC25C (By similarity). Phosphorylation of CDKN1A, a regulator of cell cycle progression at G1, results in the relocation of CDKN1A to the cytoplasm and enhanced CDKN1A protein stability (By similarity). Promotes cell cycle progression and tumorigenesis by down-regulating expression of a regulator of cell cycle progression, CDKN1B, at both transcriptional and post-translational levels (By similarity). Phosphorylation of CDKN1B, induces 14-3-3 proteins binding, nuclear export and proteasome-dependent degradation (By similarity). May affect the structure or silencing of chromatin by phosphorylating HP1 gamma/CBX3 (By similarity). Also acts as a regulator of homing and migration of bone marrow cells involving functional interaction with the CXCL12-CXCR4 signaling axis (PubMed:19687226). Acts as a positive regulator of mTORC1 signaling by mediating phosphorylation and inhibition of DEPDC5 component of the GATOR1 complex (PubMed:31548394). Acts as a negative regulator of innate immunity by mediating phosphorylation and inactivation of GBP1 in absence of infection: phosphorylation of GBP1 induces interaction with 14-3-3 protein sigma (SFN) and retention in the cytosol (By similarity). Also phosphorylates and activates the ATP-binding cassette transporter ABCG2, allowing resistance to drugs through their excretion from cells (By similarity). Promotes brown adipocyte differentiation (PubMed:27923061).</text>
</comment>
<comment type="catalytic activity">
    <reaction>
        <text>L-seryl-[protein] + ATP = O-phospho-L-seryl-[protein] + ADP + H(+)</text>
        <dbReference type="Rhea" id="RHEA:17989"/>
        <dbReference type="Rhea" id="RHEA-COMP:9863"/>
        <dbReference type="Rhea" id="RHEA-COMP:11604"/>
        <dbReference type="ChEBI" id="CHEBI:15378"/>
        <dbReference type="ChEBI" id="CHEBI:29999"/>
        <dbReference type="ChEBI" id="CHEBI:30616"/>
        <dbReference type="ChEBI" id="CHEBI:83421"/>
        <dbReference type="ChEBI" id="CHEBI:456216"/>
        <dbReference type="EC" id="2.7.11.1"/>
    </reaction>
</comment>
<comment type="catalytic activity">
    <reaction>
        <text>L-threonyl-[protein] + ATP = O-phospho-L-threonyl-[protein] + ADP + H(+)</text>
        <dbReference type="Rhea" id="RHEA:46608"/>
        <dbReference type="Rhea" id="RHEA-COMP:11060"/>
        <dbReference type="Rhea" id="RHEA-COMP:11605"/>
        <dbReference type="ChEBI" id="CHEBI:15378"/>
        <dbReference type="ChEBI" id="CHEBI:30013"/>
        <dbReference type="ChEBI" id="CHEBI:30616"/>
        <dbReference type="ChEBI" id="CHEBI:61977"/>
        <dbReference type="ChEBI" id="CHEBI:456216"/>
        <dbReference type="EC" id="2.7.11.1"/>
    </reaction>
</comment>
<comment type="cofactor">
    <cofactor evidence="1">
        <name>Mg(2+)</name>
        <dbReference type="ChEBI" id="CHEBI:18420"/>
    </cofactor>
</comment>
<comment type="subunit">
    <text evidence="1 4">Interacts with RP9 (PubMed:10931201). Interacts with HSP90AA1, this interaction stabilizes PIM1 protein levels. Interacts (ubiquitinated form) with HSP70 and promotes its proteasomal degradation (By similarity).</text>
</comment>
<comment type="subunit">
    <molecule>Isoform 1</molecule>
    <text evidence="7">Isoform 1 is isolated as a monomer whereas isoform 2 complexes with other proteins.</text>
</comment>
<comment type="subcellular location">
    <subcellularLocation>
        <location evidence="7">Cytoplasm</location>
    </subcellularLocation>
    <subcellularLocation>
        <location evidence="7">Nucleus</location>
    </subcellularLocation>
    <subcellularLocation>
        <location evidence="7">Cell membrane</location>
    </subcellularLocation>
    <text>Mainly located in the cytoplasm.</text>
</comment>
<comment type="alternative products">
    <event type="alternative initiation"/>
    <isoform>
        <id>P06803-1</id>
        <name>1</name>
        <sequence type="displayed"/>
    </isoform>
    <isoform>
        <id>P06803-2</id>
        <name>2</name>
        <sequence type="described" ref="VSP_059830"/>
    </isoform>
</comment>
<comment type="PTM">
    <text evidence="1">Autophosphorylated on both serine/threonine and tyrosine residues. Phosphorylated. Interaction with PPP2CA promotes dephosphorylation (By similarity).</text>
</comment>
<comment type="PTM">
    <text evidence="1">Ubiquitinated, leading to proteasomal degradation.</text>
</comment>
<comment type="disease">
    <text>Frequently activated by provirus insertion in murine leukemia virus-induced T-cell lymphomas.</text>
</comment>
<comment type="disruption phenotype">
    <text evidence="5 12 13">Deficient mice are viable and fertile however they have a specific defect in interleukin-7 (IL7)-driven growth of pre-B cells, as well as IL3-dependent growth of bone marrow-derived mast cells. Triple knockout mice PIM1/PIM2/PIM3 are viable and fertile too, but their body size is reduced at birth and throughout postnatal life due to a reduction in the number of cells rather than cell size.</text>
</comment>
<comment type="miscellaneous">
    <molecule>Isoform 2</molecule>
    <text evidence="7">Initiates from CTG codon.</text>
</comment>
<comment type="similarity">
    <text evidence="15">Belongs to the protein kinase superfamily. CAMK Ser/Thr protein kinase family. PIM subfamily.</text>
</comment>
<gene>
    <name type="primary">Pim1</name>
    <name type="synonym">Pim-1</name>
</gene>
<evidence type="ECO:0000250" key="1">
    <source>
        <dbReference type="UniProtKB" id="P11309"/>
    </source>
</evidence>
<evidence type="ECO:0000255" key="2">
    <source>
        <dbReference type="PROSITE-ProRule" id="PRU00159"/>
    </source>
</evidence>
<evidence type="ECO:0000255" key="3">
    <source>
        <dbReference type="PROSITE-ProRule" id="PRU10027"/>
    </source>
</evidence>
<evidence type="ECO:0000269" key="4">
    <source>
    </source>
</evidence>
<evidence type="ECO:0000269" key="5">
    <source>
    </source>
</evidence>
<evidence type="ECO:0000269" key="6">
    <source>
    </source>
</evidence>
<evidence type="ECO:0000269" key="7">
    <source>
    </source>
</evidence>
<evidence type="ECO:0000269" key="8">
    <source>
    </source>
</evidence>
<evidence type="ECO:0000269" key="9">
    <source>
    </source>
</evidence>
<evidence type="ECO:0000269" key="10">
    <source>
    </source>
</evidence>
<evidence type="ECO:0000269" key="11">
    <source>
    </source>
</evidence>
<evidence type="ECO:0000269" key="12">
    <source>
    </source>
</evidence>
<evidence type="ECO:0000269" key="13">
    <source>
    </source>
</evidence>
<evidence type="ECO:0000303" key="14">
    <source>
    </source>
</evidence>
<evidence type="ECO:0000305" key="15"/>
<dbReference type="EC" id="2.7.11.1"/>
<dbReference type="EMBL" id="M13945">
    <property type="protein sequence ID" value="AAA39930.1"/>
    <property type="molecule type" value="Genomic_DNA"/>
</dbReference>
<dbReference type="EMBL" id="AC163629">
    <property type="status" value="NOT_ANNOTATED_CDS"/>
    <property type="molecule type" value="Genomic_DNA"/>
</dbReference>
<dbReference type="EMBL" id="BC042885">
    <property type="protein sequence ID" value="AAH42885.1"/>
    <property type="molecule type" value="mRNA"/>
</dbReference>
<dbReference type="EMBL" id="BC053019">
    <property type="protein sequence ID" value="AAH53019.1"/>
    <property type="molecule type" value="mRNA"/>
</dbReference>
<dbReference type="EMBL" id="BC055316">
    <property type="protein sequence ID" value="AAH55316.1"/>
    <property type="molecule type" value="mRNA"/>
</dbReference>
<dbReference type="CCDS" id="CCDS79520.1">
    <molecule id="P06803-1"/>
</dbReference>
<dbReference type="PIR" id="A24169">
    <property type="entry name" value="TVMSP1"/>
</dbReference>
<dbReference type="RefSeq" id="NP_032868.2">
    <molecule id="P06803-1"/>
    <property type="nucleotide sequence ID" value="NM_008842.3"/>
</dbReference>
<dbReference type="SMR" id="P06803"/>
<dbReference type="FunCoup" id="P06803">
    <property type="interactions" value="2026"/>
</dbReference>
<dbReference type="STRING" id="10090.ENSMUSP00000024811"/>
<dbReference type="BindingDB" id="P06803"/>
<dbReference type="ChEMBL" id="CHEMBL3297640"/>
<dbReference type="iPTMnet" id="P06803"/>
<dbReference type="PhosphoSitePlus" id="P06803"/>
<dbReference type="PaxDb" id="10090-ENSMUSP00000024811"/>
<dbReference type="ProteomicsDB" id="289897">
    <molecule id="P06803-1"/>
</dbReference>
<dbReference type="ProteomicsDB" id="289898">
    <molecule id="P06803-2"/>
</dbReference>
<dbReference type="ProteomicsDB" id="331150"/>
<dbReference type="Antibodypedia" id="1207">
    <property type="antibodies" value="710 antibodies from 39 providers"/>
</dbReference>
<dbReference type="DNASU" id="18712"/>
<dbReference type="Ensembl" id="ENSMUST00000024811.9">
    <molecule id="P06803-1"/>
    <property type="protein sequence ID" value="ENSMUSP00000024811.8"/>
    <property type="gene ID" value="ENSMUSG00000024014.9"/>
</dbReference>
<dbReference type="GeneID" id="18712"/>
<dbReference type="KEGG" id="mmu:18712"/>
<dbReference type="UCSC" id="uc008bsz.1">
    <property type="organism name" value="mouse"/>
</dbReference>
<dbReference type="UCSC" id="uc008bta.1">
    <molecule id="P06803-1"/>
    <property type="organism name" value="mouse"/>
</dbReference>
<dbReference type="AGR" id="MGI:97584"/>
<dbReference type="CTD" id="5292"/>
<dbReference type="MGI" id="MGI:97584">
    <property type="gene designation" value="Pim1"/>
</dbReference>
<dbReference type="VEuPathDB" id="HostDB:ENSMUSG00000024014"/>
<dbReference type="eggNOG" id="KOG0583">
    <property type="taxonomic scope" value="Eukaryota"/>
</dbReference>
<dbReference type="GeneTree" id="ENSGT00940000153394"/>
<dbReference type="HOGENOM" id="CLU_000288_63_0_1"/>
<dbReference type="InParanoid" id="P06803"/>
<dbReference type="OMA" id="IIRGQVY"/>
<dbReference type="OrthoDB" id="10949at9989"/>
<dbReference type="PhylomeDB" id="P06803"/>
<dbReference type="TreeFam" id="TF320810"/>
<dbReference type="BRENDA" id="2.7.11.1">
    <property type="organism ID" value="3474"/>
</dbReference>
<dbReference type="BioGRID-ORCS" id="18712">
    <property type="hits" value="9 hits in 75 CRISPR screens"/>
</dbReference>
<dbReference type="ChiTaRS" id="Pim1">
    <property type="organism name" value="mouse"/>
</dbReference>
<dbReference type="PRO" id="PR:P06803"/>
<dbReference type="Proteomes" id="UP000000589">
    <property type="component" value="Chromosome 17"/>
</dbReference>
<dbReference type="RNAct" id="P06803">
    <property type="molecule type" value="protein"/>
</dbReference>
<dbReference type="Bgee" id="ENSMUSG00000024014">
    <property type="expression patterns" value="Expressed in granulocyte and 211 other cell types or tissues"/>
</dbReference>
<dbReference type="ExpressionAtlas" id="P06803">
    <property type="expression patterns" value="baseline and differential"/>
</dbReference>
<dbReference type="GO" id="GO:0005829">
    <property type="term" value="C:cytosol"/>
    <property type="evidence" value="ECO:0007669"/>
    <property type="project" value="Ensembl"/>
</dbReference>
<dbReference type="GO" id="GO:0005730">
    <property type="term" value="C:nucleolus"/>
    <property type="evidence" value="ECO:0007669"/>
    <property type="project" value="Ensembl"/>
</dbReference>
<dbReference type="GO" id="GO:0005654">
    <property type="term" value="C:nucleoplasm"/>
    <property type="evidence" value="ECO:0007669"/>
    <property type="project" value="Ensembl"/>
</dbReference>
<dbReference type="GO" id="GO:0005886">
    <property type="term" value="C:plasma membrane"/>
    <property type="evidence" value="ECO:0007669"/>
    <property type="project" value="UniProtKB-SubCell"/>
</dbReference>
<dbReference type="GO" id="GO:0005524">
    <property type="term" value="F:ATP binding"/>
    <property type="evidence" value="ECO:0000314"/>
    <property type="project" value="UniProtKB"/>
</dbReference>
<dbReference type="GO" id="GO:0030145">
    <property type="term" value="F:manganese ion binding"/>
    <property type="evidence" value="ECO:0000314"/>
    <property type="project" value="UniProtKB"/>
</dbReference>
<dbReference type="GO" id="GO:0106310">
    <property type="term" value="F:protein serine kinase activity"/>
    <property type="evidence" value="ECO:0007669"/>
    <property type="project" value="RHEA"/>
</dbReference>
<dbReference type="GO" id="GO:0004674">
    <property type="term" value="F:protein serine/threonine kinase activity"/>
    <property type="evidence" value="ECO:0000314"/>
    <property type="project" value="UniProtKB"/>
</dbReference>
<dbReference type="GO" id="GO:0043024">
    <property type="term" value="F:ribosomal small subunit binding"/>
    <property type="evidence" value="ECO:0007669"/>
    <property type="project" value="Ensembl"/>
</dbReference>
<dbReference type="GO" id="GO:0006915">
    <property type="term" value="P:apoptotic process"/>
    <property type="evidence" value="ECO:0007669"/>
    <property type="project" value="UniProtKB-KW"/>
</dbReference>
<dbReference type="GO" id="GO:1990748">
    <property type="term" value="P:cellular detoxification"/>
    <property type="evidence" value="ECO:0000250"/>
    <property type="project" value="UniProtKB"/>
</dbReference>
<dbReference type="GO" id="GO:0071346">
    <property type="term" value="P:cellular response to type II interferon"/>
    <property type="evidence" value="ECO:0000250"/>
    <property type="project" value="UniProtKB"/>
</dbReference>
<dbReference type="GO" id="GO:0043066">
    <property type="term" value="P:negative regulation of apoptotic process"/>
    <property type="evidence" value="ECO:0000250"/>
    <property type="project" value="UniProtKB"/>
</dbReference>
<dbReference type="GO" id="GO:0045824">
    <property type="term" value="P:negative regulation of innate immune response"/>
    <property type="evidence" value="ECO:0000250"/>
    <property type="project" value="UniProtKB"/>
</dbReference>
<dbReference type="GO" id="GO:0090336">
    <property type="term" value="P:positive regulation of brown fat cell differentiation"/>
    <property type="evidence" value="ECO:0000315"/>
    <property type="project" value="UniProtKB"/>
</dbReference>
<dbReference type="GO" id="GO:0060045">
    <property type="term" value="P:positive regulation of cardiac muscle cell proliferation"/>
    <property type="evidence" value="ECO:0007669"/>
    <property type="project" value="Ensembl"/>
</dbReference>
<dbReference type="GO" id="GO:1905062">
    <property type="term" value="P:positive regulation of cardioblast proliferation"/>
    <property type="evidence" value="ECO:0007669"/>
    <property type="project" value="Ensembl"/>
</dbReference>
<dbReference type="GO" id="GO:0045893">
    <property type="term" value="P:positive regulation of DNA-templated transcription"/>
    <property type="evidence" value="ECO:0000315"/>
    <property type="project" value="UniProtKB"/>
</dbReference>
<dbReference type="GO" id="GO:1904263">
    <property type="term" value="P:positive regulation of TORC1 signaling"/>
    <property type="evidence" value="ECO:0000250"/>
    <property type="project" value="UniProtKB"/>
</dbReference>
<dbReference type="GO" id="GO:0006468">
    <property type="term" value="P:protein phosphorylation"/>
    <property type="evidence" value="ECO:0000314"/>
    <property type="project" value="UniProtKB"/>
</dbReference>
<dbReference type="GO" id="GO:0050821">
    <property type="term" value="P:protein stabilization"/>
    <property type="evidence" value="ECO:0000314"/>
    <property type="project" value="UniProtKB"/>
</dbReference>
<dbReference type="GO" id="GO:1902033">
    <property type="term" value="P:regulation of hematopoietic stem cell proliferation"/>
    <property type="evidence" value="ECO:0000314"/>
    <property type="project" value="CACAO"/>
</dbReference>
<dbReference type="GO" id="GO:0022898">
    <property type="term" value="P:regulation of transmembrane transporter activity"/>
    <property type="evidence" value="ECO:0000250"/>
    <property type="project" value="UniProtKB"/>
</dbReference>
<dbReference type="GO" id="GO:0070561">
    <property type="term" value="P:vitamin D receptor signaling pathway"/>
    <property type="evidence" value="ECO:0007669"/>
    <property type="project" value="Ensembl"/>
</dbReference>
<dbReference type="FunFam" id="1.10.510.10:FF:000209">
    <property type="entry name" value="Serine/threonine-protein kinase pim-1"/>
    <property type="match status" value="1"/>
</dbReference>
<dbReference type="FunFam" id="3.30.200.20:FF:000232">
    <property type="entry name" value="Serine/threonine-protein kinase pim-1"/>
    <property type="match status" value="1"/>
</dbReference>
<dbReference type="Gene3D" id="3.30.200.20">
    <property type="entry name" value="Phosphorylase Kinase, domain 1"/>
    <property type="match status" value="1"/>
</dbReference>
<dbReference type="Gene3D" id="1.10.510.10">
    <property type="entry name" value="Transferase(Phosphotransferase) domain 1"/>
    <property type="match status" value="1"/>
</dbReference>
<dbReference type="InterPro" id="IPR011009">
    <property type="entry name" value="Kinase-like_dom_sf"/>
</dbReference>
<dbReference type="InterPro" id="IPR017348">
    <property type="entry name" value="PIM1/2/3"/>
</dbReference>
<dbReference type="InterPro" id="IPR051138">
    <property type="entry name" value="PIM_Ser/Thr_kinase"/>
</dbReference>
<dbReference type="InterPro" id="IPR000719">
    <property type="entry name" value="Prot_kinase_dom"/>
</dbReference>
<dbReference type="InterPro" id="IPR017441">
    <property type="entry name" value="Protein_kinase_ATP_BS"/>
</dbReference>
<dbReference type="InterPro" id="IPR008271">
    <property type="entry name" value="Ser/Thr_kinase_AS"/>
</dbReference>
<dbReference type="PANTHER" id="PTHR22984">
    <property type="entry name" value="SERINE/THREONINE-PROTEIN KINASE PIM"/>
    <property type="match status" value="1"/>
</dbReference>
<dbReference type="PANTHER" id="PTHR22984:SF29">
    <property type="entry name" value="SERINE_THREONINE-PROTEIN KINASE PIM-1"/>
    <property type="match status" value="1"/>
</dbReference>
<dbReference type="Pfam" id="PF00069">
    <property type="entry name" value="Pkinase"/>
    <property type="match status" value="1"/>
</dbReference>
<dbReference type="PIRSF" id="PIRSF037993">
    <property type="entry name" value="STPK_Pim-1"/>
    <property type="match status" value="1"/>
</dbReference>
<dbReference type="SMART" id="SM00220">
    <property type="entry name" value="S_TKc"/>
    <property type="match status" value="1"/>
</dbReference>
<dbReference type="SUPFAM" id="SSF56112">
    <property type="entry name" value="Protein kinase-like (PK-like)"/>
    <property type="match status" value="1"/>
</dbReference>
<dbReference type="PROSITE" id="PS00107">
    <property type="entry name" value="PROTEIN_KINASE_ATP"/>
    <property type="match status" value="1"/>
</dbReference>
<dbReference type="PROSITE" id="PS50011">
    <property type="entry name" value="PROTEIN_KINASE_DOM"/>
    <property type="match status" value="1"/>
</dbReference>
<dbReference type="PROSITE" id="PS00108">
    <property type="entry name" value="PROTEIN_KINASE_ST"/>
    <property type="match status" value="1"/>
</dbReference>
<reference key="1">
    <citation type="journal article" date="1986" name="Cell">
        <title>The primary structure of the putative oncogene pim-1 shows extensive homology with protein kinases.</title>
        <authorList>
            <person name="Selten G."/>
            <person name="Cuypers H.T."/>
            <person name="Boelens W."/>
            <person name="Robanus-Maandag E."/>
            <person name="Verbeek J."/>
            <person name="Domen J."/>
            <person name="van Beveren C."/>
            <person name="Berns A."/>
        </authorList>
    </citation>
    <scope>NUCLEOTIDE SEQUENCE [GENOMIC DNA] (ISOFORM 1)</scope>
</reference>
<reference key="2">
    <citation type="journal article" date="1991" name="EMBO J.">
        <title>The pim-1 oncogene encodes two related protein-serine/threonine kinases by alternative initiation at AUG and CUG.</title>
        <authorList>
            <person name="Saris C.J."/>
            <person name="Domen J."/>
            <person name="Berns A."/>
        </authorList>
    </citation>
    <scope>NUCLEOTIDE SEQUENCE [MRNA] (ISOFORM 2)</scope>
    <scope>ALTERNATIVE INITIATION</scope>
    <scope>FUNCTION</scope>
    <scope>SUBUNIT</scope>
    <scope>AUTOPHOSPHORYLATION</scope>
    <scope>SUBCELLULAR LOCATION</scope>
    <scope>MUTAGENESIS OF LYS-67</scope>
</reference>
<reference key="3">
    <citation type="journal article" date="2009" name="PLoS Biol.">
        <title>Lineage-specific biology revealed by a finished genome assembly of the mouse.</title>
        <authorList>
            <person name="Church D.M."/>
            <person name="Goodstadt L."/>
            <person name="Hillier L.W."/>
            <person name="Zody M.C."/>
            <person name="Goldstein S."/>
            <person name="She X."/>
            <person name="Bult C.J."/>
            <person name="Agarwala R."/>
            <person name="Cherry J.L."/>
            <person name="DiCuccio M."/>
            <person name="Hlavina W."/>
            <person name="Kapustin Y."/>
            <person name="Meric P."/>
            <person name="Maglott D."/>
            <person name="Birtle Z."/>
            <person name="Marques A.C."/>
            <person name="Graves T."/>
            <person name="Zhou S."/>
            <person name="Teague B."/>
            <person name="Potamousis K."/>
            <person name="Churas C."/>
            <person name="Place M."/>
            <person name="Herschleb J."/>
            <person name="Runnheim R."/>
            <person name="Forrest D."/>
            <person name="Amos-Landgraf J."/>
            <person name="Schwartz D.C."/>
            <person name="Cheng Z."/>
            <person name="Lindblad-Toh K."/>
            <person name="Eichler E.E."/>
            <person name="Ponting C.P."/>
        </authorList>
    </citation>
    <scope>NUCLEOTIDE SEQUENCE [LARGE SCALE GENOMIC DNA]</scope>
    <source>
        <strain>C57BL/6J</strain>
    </source>
</reference>
<reference key="4">
    <citation type="journal article" date="2004" name="Genome Res.">
        <title>The status, quality, and expansion of the NIH full-length cDNA project: the Mammalian Gene Collection (MGC).</title>
        <authorList>
            <consortium name="The MGC Project Team"/>
        </authorList>
    </citation>
    <scope>NUCLEOTIDE SEQUENCE [LARGE SCALE MRNA] (ISOFORM 1)</scope>
    <source>
        <strain>C57BL/6J</strain>
        <tissue>Brain</tissue>
        <tissue>Eye</tissue>
    </source>
</reference>
<reference key="5">
    <citation type="journal article" date="1993" name="Blood">
        <title>Impaired interleukin-3 response in Pim-1-deficient bone marrow-derived mast cells.</title>
        <authorList>
            <person name="Domen J."/>
            <person name="van der Lugt N.M."/>
            <person name="Laird P.W."/>
            <person name="Saris C.J."/>
            <person name="Clarke A.R."/>
            <person name="Hooper M.L."/>
            <person name="Berns A."/>
        </authorList>
    </citation>
    <scope>DISRUPTION PHENOTYPE</scope>
</reference>
<reference key="6">
    <citation type="journal article" date="1993" name="J. Exp. Med.">
        <title>Pim-1 levels determine the size of early B lymphoid compartments in bone marrow.</title>
        <authorList>
            <person name="Domen J."/>
            <person name="van der Lugt N.M."/>
            <person name="Acton D."/>
            <person name="Laird P.W."/>
            <person name="Linders K."/>
            <person name="Berns A."/>
        </authorList>
    </citation>
    <scope>DISRUPTION PHENOTYPE</scope>
</reference>
<reference key="7">
    <citation type="journal article" date="2000" name="Eur. J. Biochem.">
        <title>PAP-1, a novel target protein of phosphorylation by Pim-1 kinase.</title>
        <authorList>
            <person name="Maita H."/>
            <person name="Harada Y."/>
            <person name="Nagakubo D."/>
            <person name="Kitaura H."/>
            <person name="Ikeda M."/>
            <person name="Tamai K."/>
            <person name="Takahashi K."/>
            <person name="Ariga H."/>
            <person name="Iguchi-Ariga S.M.M."/>
        </authorList>
    </citation>
    <scope>INTERACTION WITH RP9</scope>
</reference>
<reference key="8">
    <citation type="journal article" date="2004" name="FEBS Lett.">
        <title>Pim-1 kinase promotes inactivation of the pro-apoptotic Bad protein by phosphorylating it on the Ser112 gatekeeper site.</title>
        <authorList>
            <person name="Aho T.L."/>
            <person name="Sandholm J."/>
            <person name="Peltola K.J."/>
            <person name="Mankonen H.P."/>
            <person name="Lilly M."/>
            <person name="Koskinen P.J."/>
        </authorList>
    </citation>
    <scope>FUNCTION IN PHOSPHORYLATION OF BAD</scope>
</reference>
<reference key="9">
    <citation type="journal article" date="2004" name="Mol. Cell. Biol.">
        <title>Mice deficient for all PIM kinases display reduced body size and impaired responses to hematopoietic growth factors.</title>
        <authorList>
            <person name="Mikkers H."/>
            <person name="Nawijn M."/>
            <person name="Allen J."/>
            <person name="Brouwers C."/>
            <person name="Verhoeven E."/>
            <person name="Jonkers J."/>
            <person name="Berns A."/>
        </authorList>
    </citation>
    <scope>DISRUPTION PHENOTYPE</scope>
    <scope>FUNCTION</scope>
</reference>
<reference key="10">
    <citation type="journal article" date="2008" name="Oncogene">
        <title>Pim kinase-dependent inhibition of c-Myc degradation.</title>
        <authorList>
            <person name="Zhang Y."/>
            <person name="Wang Z."/>
            <person name="Li X."/>
            <person name="Magnuson N.S."/>
        </authorList>
    </citation>
    <scope>FUNCTION IN PHOSPHORYLATION OF MYC</scope>
</reference>
<reference key="11">
    <citation type="journal article" date="2009" name="J. Exp. Med.">
        <title>Dissection of PIM serine/threonine kinases in FLT3-ITD-induced leukemogenesis reveals PIM1 as regulator of CXCL12-CXCR4-mediated homing and migration.</title>
        <authorList>
            <person name="Grundler R."/>
            <person name="Brault L."/>
            <person name="Gasser C."/>
            <person name="Bullock A.N."/>
            <person name="Dechow T."/>
            <person name="Woetzel S."/>
            <person name="Pogacic V."/>
            <person name="Villa A."/>
            <person name="Ehret S."/>
            <person name="Berridge G."/>
            <person name="Spoo A."/>
            <person name="Dierks C."/>
            <person name="Biondi A."/>
            <person name="Knapp S."/>
            <person name="Duyster J."/>
            <person name="Schwaller J."/>
        </authorList>
    </citation>
    <scope>FUNCTION IN PHOSPHORYLATION OF CXCR4</scope>
    <scope>FUNCTION IN CELL MIGRATION</scope>
</reference>
<reference key="12">
    <citation type="journal article" date="2016" name="PLoS Genet.">
        <title>Comparative Transcriptomic and Epigenomic Analyses Reveal New Regulators of Murine Brown Adipogenesis.</title>
        <authorList>
            <person name="Brunmeir R."/>
            <person name="Wu J."/>
            <person name="Peng X."/>
            <person name="Kim S.Y."/>
            <person name="Julien S.G."/>
            <person name="Zhang Q."/>
            <person name="Xie W."/>
            <person name="Xu F."/>
        </authorList>
    </citation>
    <scope>FUNCTION</scope>
</reference>
<reference key="13">
    <citation type="journal article" date="2019" name="Proc. Natl. Acad. Sci. U.S.A.">
        <title>Phosphorylation of DEPDC5, a component of the GATOR1 complex, releases inhibition of mTORC1 and promotes tumor growth.</title>
        <authorList>
            <person name="Padi S.K.R."/>
            <person name="Singh N."/>
            <person name="Bearss J.J."/>
            <person name="Olive V."/>
            <person name="Song J.H."/>
            <person name="Cardo-Vila M."/>
            <person name="Kraft A.S."/>
            <person name="Okumura K."/>
        </authorList>
    </citation>
    <scope>FUNCTION</scope>
</reference>
<accession>P06803</accession>
<accession>F6XDQ5</accession>
<accession>Q8CFN8</accession>
<feature type="chain" id="PRO_0000043351" description="Serine/threonine-protein kinase pim-1">
    <location>
        <begin position="1"/>
        <end position="313"/>
    </location>
</feature>
<feature type="domain" description="Protein kinase" evidence="2">
    <location>
        <begin position="38"/>
        <end position="290"/>
    </location>
</feature>
<feature type="active site" description="Proton acceptor" evidence="2 3">
    <location>
        <position position="167"/>
    </location>
</feature>
<feature type="binding site" evidence="2">
    <location>
        <begin position="44"/>
        <end position="52"/>
    </location>
    <ligand>
        <name>ATP</name>
        <dbReference type="ChEBI" id="CHEBI:30616"/>
    </ligand>
</feature>
<feature type="binding site">
    <location>
        <position position="67"/>
    </location>
    <ligand>
        <name>ATP</name>
        <dbReference type="ChEBI" id="CHEBI:30616"/>
    </ligand>
</feature>
<feature type="binding site" evidence="2">
    <location>
        <position position="121"/>
    </location>
    <ligand>
        <name>ATP</name>
        <dbReference type="ChEBI" id="CHEBI:30616"/>
    </ligand>
</feature>
<feature type="binding site" evidence="2">
    <location>
        <position position="128"/>
    </location>
    <ligand>
        <name>ATP</name>
        <dbReference type="ChEBI" id="CHEBI:30616"/>
    </ligand>
</feature>
<feature type="modified residue" description="Phosphoserine" evidence="1">
    <location>
        <position position="8"/>
    </location>
</feature>
<feature type="modified residue" description="Phosphothreonine" evidence="1">
    <location>
        <position position="23"/>
    </location>
</feature>
<feature type="modified residue" description="Phosphoserine" evidence="1">
    <location>
        <position position="98"/>
    </location>
</feature>
<feature type="modified residue" description="Phosphoserine" evidence="1">
    <location>
        <position position="261"/>
    </location>
</feature>
<feature type="splice variant" id="VSP_059830" description="In isoform 2." evidence="14">
    <original>M</original>
    <variation>MGPAAPLALPPPALPDPAGEPARGQPRQRPQSSSDSPSALRASRSQSRNATRSLSPGRRLSPSSLRRRCCSSRHRRRTDTLEVGM</variation>
    <location>
        <position position="1"/>
    </location>
</feature>
<feature type="mutagenesis site" description="Loss of autophosphorylation and kinase activity." evidence="7">
    <original>K</original>
    <variation>M</variation>
    <location>
        <position position="67"/>
    </location>
</feature>
<feature type="sequence conflict" description="In Ref. 1; AAA39930." evidence="15" ref="1">
    <original>A</original>
    <variation>R</variation>
    <location>
        <position position="15"/>
    </location>
</feature>
<sequence>MLLSKINSLAHLRAAPCNDLHATKLAPGKEKEPLESQYQVGPLLGSGGFGSVYSGIRVADNLPVAIKHVEKDRISDWGELPNGTRVPMEVVLLKKVSSDFSGVIRLLDWFERPDSFVLILERPEPVQDLFDFITERGALQEDLARGFFWQVLEAVRHCHNCGVLHRDIKDENILIDLSRGEIKLIDFGSGALLKDTVYTDFDGTRVYSPPEWIRYHRYHGRSAAVWSLGILLYDMVCGDIPFEHDEEIIKGQVFFRQTVSSECQHLIKWCLSLRPSDRPSFEEIRNHPWMQGDLLPQAASEIHLHSLSPGSSK</sequence>
<organism>
    <name type="scientific">Mus musculus</name>
    <name type="common">Mouse</name>
    <dbReference type="NCBI Taxonomy" id="10090"/>
    <lineage>
        <taxon>Eukaryota</taxon>
        <taxon>Metazoa</taxon>
        <taxon>Chordata</taxon>
        <taxon>Craniata</taxon>
        <taxon>Vertebrata</taxon>
        <taxon>Euteleostomi</taxon>
        <taxon>Mammalia</taxon>
        <taxon>Eutheria</taxon>
        <taxon>Euarchontoglires</taxon>
        <taxon>Glires</taxon>
        <taxon>Rodentia</taxon>
        <taxon>Myomorpha</taxon>
        <taxon>Muroidea</taxon>
        <taxon>Muridae</taxon>
        <taxon>Murinae</taxon>
        <taxon>Mus</taxon>
        <taxon>Mus</taxon>
    </lineage>
</organism>
<keyword id="KW-0024">Alternative initiation</keyword>
<keyword id="KW-0053">Apoptosis</keyword>
<keyword id="KW-0067">ATP-binding</keyword>
<keyword id="KW-0131">Cell cycle</keyword>
<keyword id="KW-1003">Cell membrane</keyword>
<keyword id="KW-0963">Cytoplasm</keyword>
<keyword id="KW-0418">Kinase</keyword>
<keyword id="KW-0460">Magnesium</keyword>
<keyword id="KW-0472">Membrane</keyword>
<keyword id="KW-0479">Metal-binding</keyword>
<keyword id="KW-0547">Nucleotide-binding</keyword>
<keyword id="KW-0539">Nucleus</keyword>
<keyword id="KW-0597">Phosphoprotein</keyword>
<keyword id="KW-0656">Proto-oncogene</keyword>
<keyword id="KW-1185">Reference proteome</keyword>
<keyword id="KW-0723">Serine/threonine-protein kinase</keyword>
<keyword id="KW-0808">Transferase</keyword>
<keyword id="KW-0832">Ubl conjugation</keyword>
<name>PIM1_MOUSE</name>
<proteinExistence type="evidence at protein level"/>